<gene>
    <name evidence="1" type="primary">flgH</name>
    <name type="ordered locus">Sbal195_3094</name>
</gene>
<proteinExistence type="inferred from homology"/>
<reference key="1">
    <citation type="submission" date="2007-11" db="EMBL/GenBank/DDBJ databases">
        <title>Complete sequence of chromosome of Shewanella baltica OS195.</title>
        <authorList>
            <consortium name="US DOE Joint Genome Institute"/>
            <person name="Copeland A."/>
            <person name="Lucas S."/>
            <person name="Lapidus A."/>
            <person name="Barry K."/>
            <person name="Glavina del Rio T."/>
            <person name="Dalin E."/>
            <person name="Tice H."/>
            <person name="Pitluck S."/>
            <person name="Chain P."/>
            <person name="Malfatti S."/>
            <person name="Shin M."/>
            <person name="Vergez L."/>
            <person name="Schmutz J."/>
            <person name="Larimer F."/>
            <person name="Land M."/>
            <person name="Hauser L."/>
            <person name="Kyrpides N."/>
            <person name="Kim E."/>
            <person name="Brettar I."/>
            <person name="Rodrigues J."/>
            <person name="Konstantinidis K."/>
            <person name="Klappenbach J."/>
            <person name="Hofle M."/>
            <person name="Tiedje J."/>
            <person name="Richardson P."/>
        </authorList>
    </citation>
    <scope>NUCLEOTIDE SEQUENCE [LARGE SCALE GENOMIC DNA]</scope>
    <source>
        <strain>OS195</strain>
    </source>
</reference>
<feature type="signal peptide" evidence="1">
    <location>
        <begin position="1"/>
        <end position="15"/>
    </location>
</feature>
<feature type="chain" id="PRO_1000080511" description="Flagellar L-ring protein">
    <location>
        <begin position="16"/>
        <end position="224"/>
    </location>
</feature>
<feature type="lipid moiety-binding region" description="N-palmitoyl cysteine" evidence="1">
    <location>
        <position position="16"/>
    </location>
</feature>
<feature type="lipid moiety-binding region" description="S-diacylglycerol cysteine" evidence="1">
    <location>
        <position position="16"/>
    </location>
</feature>
<evidence type="ECO:0000255" key="1">
    <source>
        <dbReference type="HAMAP-Rule" id="MF_00415"/>
    </source>
</evidence>
<protein>
    <recommendedName>
        <fullName evidence="1">Flagellar L-ring protein</fullName>
    </recommendedName>
    <alternativeName>
        <fullName evidence="1">Basal body L-ring protein</fullName>
    </alternativeName>
</protein>
<accession>A9KWR9</accession>
<organism>
    <name type="scientific">Shewanella baltica (strain OS195)</name>
    <dbReference type="NCBI Taxonomy" id="399599"/>
    <lineage>
        <taxon>Bacteria</taxon>
        <taxon>Pseudomonadati</taxon>
        <taxon>Pseudomonadota</taxon>
        <taxon>Gammaproteobacteria</taxon>
        <taxon>Alteromonadales</taxon>
        <taxon>Shewanellaceae</taxon>
        <taxon>Shewanella</taxon>
    </lineage>
</organism>
<sequence>MARYLVLAVALLLAACSSTQKKPLADDPFYAPVYPEAPPTKIAATGSIYQDSQASSLYSDIRAHKVGDIITIVLKESTQAKKSAGNQIKKGSDMSLDPIFAGGSNVSIGGVPIDLRYKDSMNTKRESDADQSNSLDGSISANVMQVLNNGSLVIRGEKWISINNGDEFIRVTGLVRSQDIKPDNTIDSTRMANARIQYSGTGTFADAQKVGWLSQFFMSDWWPF</sequence>
<name>FLGH_SHEB9</name>
<comment type="function">
    <text evidence="1">Assembles around the rod to form the L-ring and probably protects the motor/basal body from shearing forces during rotation.</text>
</comment>
<comment type="subunit">
    <text evidence="1">The basal body constitutes a major portion of the flagellar organelle and consists of four rings (L,P,S, and M) mounted on a central rod.</text>
</comment>
<comment type="subcellular location">
    <subcellularLocation>
        <location evidence="1">Cell outer membrane</location>
        <topology evidence="1">Lipid-anchor</topology>
    </subcellularLocation>
    <subcellularLocation>
        <location evidence="1">Bacterial flagellum basal body</location>
    </subcellularLocation>
</comment>
<comment type="similarity">
    <text evidence="1">Belongs to the FlgH family.</text>
</comment>
<keyword id="KW-0975">Bacterial flagellum</keyword>
<keyword id="KW-0998">Cell outer membrane</keyword>
<keyword id="KW-0449">Lipoprotein</keyword>
<keyword id="KW-0472">Membrane</keyword>
<keyword id="KW-0564">Palmitate</keyword>
<keyword id="KW-0732">Signal</keyword>
<dbReference type="EMBL" id="CP000891">
    <property type="protein sequence ID" value="ABX50256.1"/>
    <property type="molecule type" value="Genomic_DNA"/>
</dbReference>
<dbReference type="RefSeq" id="WP_006082421.1">
    <property type="nucleotide sequence ID" value="NC_009997.1"/>
</dbReference>
<dbReference type="SMR" id="A9KWR9"/>
<dbReference type="GeneID" id="11773155"/>
<dbReference type="KEGG" id="sbn:Sbal195_3094"/>
<dbReference type="HOGENOM" id="CLU_069313_0_2_6"/>
<dbReference type="Proteomes" id="UP000000770">
    <property type="component" value="Chromosome"/>
</dbReference>
<dbReference type="GO" id="GO:0009427">
    <property type="term" value="C:bacterial-type flagellum basal body, distal rod, L ring"/>
    <property type="evidence" value="ECO:0007669"/>
    <property type="project" value="InterPro"/>
</dbReference>
<dbReference type="GO" id="GO:0009279">
    <property type="term" value="C:cell outer membrane"/>
    <property type="evidence" value="ECO:0007669"/>
    <property type="project" value="UniProtKB-SubCell"/>
</dbReference>
<dbReference type="GO" id="GO:0003774">
    <property type="term" value="F:cytoskeletal motor activity"/>
    <property type="evidence" value="ECO:0007669"/>
    <property type="project" value="InterPro"/>
</dbReference>
<dbReference type="GO" id="GO:0071973">
    <property type="term" value="P:bacterial-type flagellum-dependent cell motility"/>
    <property type="evidence" value="ECO:0007669"/>
    <property type="project" value="InterPro"/>
</dbReference>
<dbReference type="HAMAP" id="MF_00415">
    <property type="entry name" value="FlgH"/>
    <property type="match status" value="1"/>
</dbReference>
<dbReference type="InterPro" id="IPR000527">
    <property type="entry name" value="Flag_Lring"/>
</dbReference>
<dbReference type="NCBIfam" id="NF001304">
    <property type="entry name" value="PRK00249.1-4"/>
    <property type="match status" value="1"/>
</dbReference>
<dbReference type="NCBIfam" id="NF009338">
    <property type="entry name" value="PRK12698.1"/>
    <property type="match status" value="1"/>
</dbReference>
<dbReference type="PANTHER" id="PTHR34933">
    <property type="entry name" value="FLAGELLAR L-RING PROTEIN"/>
    <property type="match status" value="1"/>
</dbReference>
<dbReference type="PANTHER" id="PTHR34933:SF1">
    <property type="entry name" value="FLAGELLAR L-RING PROTEIN"/>
    <property type="match status" value="1"/>
</dbReference>
<dbReference type="Pfam" id="PF02107">
    <property type="entry name" value="FlgH"/>
    <property type="match status" value="1"/>
</dbReference>
<dbReference type="PRINTS" id="PR01008">
    <property type="entry name" value="FLGLRINGFLGH"/>
</dbReference>
<dbReference type="PROSITE" id="PS51257">
    <property type="entry name" value="PROKAR_LIPOPROTEIN"/>
    <property type="match status" value="1"/>
</dbReference>